<keyword id="KW-0328">Glycosyltransferase</keyword>
<keyword id="KW-1185">Reference proteome</keyword>
<keyword id="KW-0808">Transferase</keyword>
<evidence type="ECO:0000250" key="1"/>
<evidence type="ECO:0000305" key="2"/>
<comment type="similarity">
    <text evidence="2">Belongs to the UDP-glycosyltransferase family.</text>
</comment>
<sequence>MGQKIHAFMFPWFAFGHMTPYLHLGNKLAEKGHRVTFLLPKKAQKQLEHQNLFPHGIVFHPLVIPHVDGLPAGAETASDIPISLVKFLSIAMDLTRDQIEAAIGALRPDLILFDLAHWVPEMAKALKVKSMLYNVMSATSIAHDLVPGGELGVAPPGYPSSKALYREHDAHALLTFSGFYKRFYHRFTTGLMNCDFISIRTCEEIEGKFCDYIESQYKKKVLLTGPMLPEPDKSKPLEDQWSHWLSGFGQGSVVFCALGSQTILEKNQFQELCLGIELTGLPFLVAVKPPKGANTIHEALPEGFEERVKGRGIVWGEWVQQPSWQPLILAHPSVGCFVSHCGFGSMWESLMSDCQIVFIPVLNDQVLTTRVMTEELEVSVEVQREETGWFSKENLSGAIMSLMDQDSEIGNQVRRNHSKLKETLASPGLLTGYTDKFVDTLENLVNEQGYIS</sequence>
<protein>
    <recommendedName>
        <fullName>UDP-glycosyltransferase 79B11</fullName>
        <ecNumber>2.4.1.-</ecNumber>
    </recommendedName>
</protein>
<reference key="1">
    <citation type="journal article" date="2000" name="Nature">
        <title>Sequence and analysis of chromosome 1 of the plant Arabidopsis thaliana.</title>
        <authorList>
            <person name="Theologis A."/>
            <person name="Ecker J.R."/>
            <person name="Palm C.J."/>
            <person name="Federspiel N.A."/>
            <person name="Kaul S."/>
            <person name="White O."/>
            <person name="Alonso J."/>
            <person name="Altafi H."/>
            <person name="Araujo R."/>
            <person name="Bowman C.L."/>
            <person name="Brooks S.Y."/>
            <person name="Buehler E."/>
            <person name="Chan A."/>
            <person name="Chao Q."/>
            <person name="Chen H."/>
            <person name="Cheuk R.F."/>
            <person name="Chin C.W."/>
            <person name="Chung M.K."/>
            <person name="Conn L."/>
            <person name="Conway A.B."/>
            <person name="Conway A.R."/>
            <person name="Creasy T.H."/>
            <person name="Dewar K."/>
            <person name="Dunn P."/>
            <person name="Etgu P."/>
            <person name="Feldblyum T.V."/>
            <person name="Feng J.-D."/>
            <person name="Fong B."/>
            <person name="Fujii C.Y."/>
            <person name="Gill J.E."/>
            <person name="Goldsmith A.D."/>
            <person name="Haas B."/>
            <person name="Hansen N.F."/>
            <person name="Hughes B."/>
            <person name="Huizar L."/>
            <person name="Hunter J.L."/>
            <person name="Jenkins J."/>
            <person name="Johnson-Hopson C."/>
            <person name="Khan S."/>
            <person name="Khaykin E."/>
            <person name="Kim C.J."/>
            <person name="Koo H.L."/>
            <person name="Kremenetskaia I."/>
            <person name="Kurtz D.B."/>
            <person name="Kwan A."/>
            <person name="Lam B."/>
            <person name="Langin-Hooper S."/>
            <person name="Lee A."/>
            <person name="Lee J.M."/>
            <person name="Lenz C.A."/>
            <person name="Li J.H."/>
            <person name="Li Y.-P."/>
            <person name="Lin X."/>
            <person name="Liu S.X."/>
            <person name="Liu Z.A."/>
            <person name="Luros J.S."/>
            <person name="Maiti R."/>
            <person name="Marziali A."/>
            <person name="Militscher J."/>
            <person name="Miranda M."/>
            <person name="Nguyen M."/>
            <person name="Nierman W.C."/>
            <person name="Osborne B.I."/>
            <person name="Pai G."/>
            <person name="Peterson J."/>
            <person name="Pham P.K."/>
            <person name="Rizzo M."/>
            <person name="Rooney T."/>
            <person name="Rowley D."/>
            <person name="Sakano H."/>
            <person name="Salzberg S.L."/>
            <person name="Schwartz J.R."/>
            <person name="Shinn P."/>
            <person name="Southwick A.M."/>
            <person name="Sun H."/>
            <person name="Tallon L.J."/>
            <person name="Tambunga G."/>
            <person name="Toriumi M.J."/>
            <person name="Town C.D."/>
            <person name="Utterback T."/>
            <person name="Van Aken S."/>
            <person name="Vaysberg M."/>
            <person name="Vysotskaia V.S."/>
            <person name="Walker M."/>
            <person name="Wu D."/>
            <person name="Yu G."/>
            <person name="Fraser C.M."/>
            <person name="Venter J.C."/>
            <person name="Davis R.W."/>
        </authorList>
    </citation>
    <scope>NUCLEOTIDE SEQUENCE [LARGE SCALE GENOMIC DNA]</scope>
    <source>
        <strain>cv. Columbia</strain>
    </source>
</reference>
<reference key="2">
    <citation type="journal article" date="2017" name="Plant J.">
        <title>Araport11: a complete reannotation of the Arabidopsis thaliana reference genome.</title>
        <authorList>
            <person name="Cheng C.Y."/>
            <person name="Krishnakumar V."/>
            <person name="Chan A.P."/>
            <person name="Thibaud-Nissen F."/>
            <person name="Schobel S."/>
            <person name="Town C.D."/>
        </authorList>
    </citation>
    <scope>GENOME REANNOTATION</scope>
    <source>
        <strain>cv. Columbia</strain>
    </source>
</reference>
<reference key="3">
    <citation type="journal article" date="2001" name="J. Biol. Chem.">
        <title>Phylogenetic analysis of the UDP-glycosyltransferase multigene family of Arabidopsis thaliana.</title>
        <authorList>
            <person name="Li Y."/>
            <person name="Baldauf S."/>
            <person name="Lim E.K."/>
            <person name="Bowles D.J."/>
        </authorList>
    </citation>
    <scope>GENE FAMILY</scope>
</reference>
<proteinExistence type="inferred from homology"/>
<organism>
    <name type="scientific">Arabidopsis thaliana</name>
    <name type="common">Mouse-ear cress</name>
    <dbReference type="NCBI Taxonomy" id="3702"/>
    <lineage>
        <taxon>Eukaryota</taxon>
        <taxon>Viridiplantae</taxon>
        <taxon>Streptophyta</taxon>
        <taxon>Embryophyta</taxon>
        <taxon>Tracheophyta</taxon>
        <taxon>Spermatophyta</taxon>
        <taxon>Magnoliopsida</taxon>
        <taxon>eudicotyledons</taxon>
        <taxon>Gunneridae</taxon>
        <taxon>Pentapetalae</taxon>
        <taxon>rosids</taxon>
        <taxon>malvids</taxon>
        <taxon>Brassicales</taxon>
        <taxon>Brassicaceae</taxon>
        <taxon>Camelineae</taxon>
        <taxon>Arabidopsis</taxon>
    </lineage>
</organism>
<name>U7B11_ARATH</name>
<accession>Q9XIQ4</accession>
<gene>
    <name type="primary">UGT79B11</name>
    <name type="ordered locus">At1g64920</name>
    <name type="ORF">F13O11.22</name>
</gene>
<feature type="chain" id="PRO_0000409117" description="UDP-glycosyltransferase 79B11">
    <location>
        <begin position="1"/>
        <end position="452"/>
    </location>
</feature>
<feature type="binding site" evidence="1">
    <location>
        <position position="260"/>
    </location>
    <ligand>
        <name>UDP-alpha-D-glucose</name>
        <dbReference type="ChEBI" id="CHEBI:58885"/>
    </ligand>
</feature>
<feature type="binding site" evidence="1">
    <location>
        <begin position="319"/>
        <end position="325"/>
    </location>
    <ligand>
        <name>UDP-alpha-D-glucose</name>
        <dbReference type="ChEBI" id="CHEBI:58885"/>
    </ligand>
</feature>
<feature type="binding site" evidence="1">
    <location>
        <begin position="340"/>
        <end position="348"/>
    </location>
    <ligand>
        <name>UDP-alpha-D-glucose</name>
        <dbReference type="ChEBI" id="CHEBI:58885"/>
    </ligand>
</feature>
<feature type="binding site" evidence="1">
    <location>
        <begin position="362"/>
        <end position="365"/>
    </location>
    <ligand>
        <name>UDP-alpha-D-glucose</name>
        <dbReference type="ChEBI" id="CHEBI:58885"/>
    </ligand>
</feature>
<dbReference type="EC" id="2.4.1.-"/>
<dbReference type="EMBL" id="AC006193">
    <property type="protein sequence ID" value="AAD38266.1"/>
    <property type="molecule type" value="Genomic_DNA"/>
</dbReference>
<dbReference type="EMBL" id="CP002684">
    <property type="protein sequence ID" value="AEE34305.1"/>
    <property type="molecule type" value="Genomic_DNA"/>
</dbReference>
<dbReference type="PIR" id="F96672">
    <property type="entry name" value="F96672"/>
</dbReference>
<dbReference type="RefSeq" id="NP_176672.1">
    <property type="nucleotide sequence ID" value="NM_105166.2"/>
</dbReference>
<dbReference type="SMR" id="Q9XIQ4"/>
<dbReference type="FunCoup" id="Q9XIQ4">
    <property type="interactions" value="10"/>
</dbReference>
<dbReference type="STRING" id="3702.Q9XIQ4"/>
<dbReference type="CAZy" id="GT1">
    <property type="family name" value="Glycosyltransferase Family 1"/>
</dbReference>
<dbReference type="PaxDb" id="3702-AT1G64920.1"/>
<dbReference type="ProteomicsDB" id="228643"/>
<dbReference type="EnsemblPlants" id="AT1G64920.1">
    <property type="protein sequence ID" value="AT1G64920.1"/>
    <property type="gene ID" value="AT1G64920"/>
</dbReference>
<dbReference type="GeneID" id="842800"/>
<dbReference type="Gramene" id="AT1G64920.1">
    <property type="protein sequence ID" value="AT1G64920.1"/>
    <property type="gene ID" value="AT1G64920"/>
</dbReference>
<dbReference type="KEGG" id="ath:AT1G64920"/>
<dbReference type="Araport" id="AT1G64920"/>
<dbReference type="TAIR" id="AT1G64920"/>
<dbReference type="eggNOG" id="KOG1192">
    <property type="taxonomic scope" value="Eukaryota"/>
</dbReference>
<dbReference type="HOGENOM" id="CLU_001724_2_3_1"/>
<dbReference type="InParanoid" id="Q9XIQ4"/>
<dbReference type="OMA" id="FHTLKIP"/>
<dbReference type="OrthoDB" id="5835829at2759"/>
<dbReference type="PhylomeDB" id="Q9XIQ4"/>
<dbReference type="BioCyc" id="ARA:AT1G64920-MONOMER"/>
<dbReference type="PRO" id="PR:Q9XIQ4"/>
<dbReference type="Proteomes" id="UP000006548">
    <property type="component" value="Chromosome 1"/>
</dbReference>
<dbReference type="ExpressionAtlas" id="Q9XIQ4">
    <property type="expression patterns" value="baseline and differential"/>
</dbReference>
<dbReference type="GO" id="GO:0035251">
    <property type="term" value="F:UDP-glucosyltransferase activity"/>
    <property type="evidence" value="ECO:0007669"/>
    <property type="project" value="InterPro"/>
</dbReference>
<dbReference type="CDD" id="cd03784">
    <property type="entry name" value="GT1_Gtf-like"/>
    <property type="match status" value="1"/>
</dbReference>
<dbReference type="FunFam" id="3.40.50.2000:FF:000037">
    <property type="entry name" value="Glycosyltransferase"/>
    <property type="match status" value="1"/>
</dbReference>
<dbReference type="FunFam" id="3.40.50.2000:FF:000087">
    <property type="entry name" value="Glycosyltransferase"/>
    <property type="match status" value="1"/>
</dbReference>
<dbReference type="Gene3D" id="3.40.50.2000">
    <property type="entry name" value="Glycogen Phosphorylase B"/>
    <property type="match status" value="2"/>
</dbReference>
<dbReference type="InterPro" id="IPR050481">
    <property type="entry name" value="UDP-glycosyltransf_plant"/>
</dbReference>
<dbReference type="InterPro" id="IPR002213">
    <property type="entry name" value="UDP_glucos_trans"/>
</dbReference>
<dbReference type="PANTHER" id="PTHR48049:SF176">
    <property type="entry name" value="ANTHOCYANIDIN 3-O-GLUCOSIDE 2'''-O-XYLOSYLTRANSFERASE-RELATED"/>
    <property type="match status" value="1"/>
</dbReference>
<dbReference type="PANTHER" id="PTHR48049">
    <property type="entry name" value="GLYCOSYLTRANSFERASE"/>
    <property type="match status" value="1"/>
</dbReference>
<dbReference type="Pfam" id="PF00201">
    <property type="entry name" value="UDPGT"/>
    <property type="match status" value="1"/>
</dbReference>
<dbReference type="SUPFAM" id="SSF53756">
    <property type="entry name" value="UDP-Glycosyltransferase/glycogen phosphorylase"/>
    <property type="match status" value="1"/>
</dbReference>